<reference key="1">
    <citation type="journal article" date="2009" name="PLoS Pathog.">
        <title>Genomic evidence for the evolution of Streptococcus equi: host restriction, increased virulence, and genetic exchange with human pathogens.</title>
        <authorList>
            <person name="Holden M.T.G."/>
            <person name="Heather Z."/>
            <person name="Paillot R."/>
            <person name="Steward K.F."/>
            <person name="Webb K."/>
            <person name="Ainslie F."/>
            <person name="Jourdan T."/>
            <person name="Bason N.C."/>
            <person name="Holroyd N.E."/>
            <person name="Mungall K."/>
            <person name="Quail M.A."/>
            <person name="Sanders M."/>
            <person name="Simmonds M."/>
            <person name="Willey D."/>
            <person name="Brooks K."/>
            <person name="Aanensen D.M."/>
            <person name="Spratt B.G."/>
            <person name="Jolley K.A."/>
            <person name="Maiden M.C.J."/>
            <person name="Kehoe M."/>
            <person name="Chanter N."/>
            <person name="Bentley S.D."/>
            <person name="Robinson C."/>
            <person name="Maskell D.J."/>
            <person name="Parkhill J."/>
            <person name="Waller A.S."/>
        </authorList>
    </citation>
    <scope>NUCLEOTIDE SEQUENCE [LARGE SCALE GENOMIC DNA]</scope>
    <source>
        <strain>4047</strain>
    </source>
</reference>
<organism>
    <name type="scientific">Streptococcus equi subsp. equi (strain 4047)</name>
    <dbReference type="NCBI Taxonomy" id="553482"/>
    <lineage>
        <taxon>Bacteria</taxon>
        <taxon>Bacillati</taxon>
        <taxon>Bacillota</taxon>
        <taxon>Bacilli</taxon>
        <taxon>Lactobacillales</taxon>
        <taxon>Streptococcaceae</taxon>
        <taxon>Streptococcus</taxon>
    </lineage>
</organism>
<dbReference type="EC" id="2.1.2.9" evidence="1"/>
<dbReference type="EMBL" id="FM204883">
    <property type="protein sequence ID" value="CAW94890.1"/>
    <property type="molecule type" value="Genomic_DNA"/>
</dbReference>
<dbReference type="RefSeq" id="WP_012679997.1">
    <property type="nucleotide sequence ID" value="NC_012471.1"/>
</dbReference>
<dbReference type="SMR" id="C0M780"/>
<dbReference type="KEGG" id="seu:SEQ_1777"/>
<dbReference type="HOGENOM" id="CLU_033347_1_1_9"/>
<dbReference type="OrthoDB" id="9802815at2"/>
<dbReference type="Proteomes" id="UP000001365">
    <property type="component" value="Chromosome"/>
</dbReference>
<dbReference type="GO" id="GO:0005829">
    <property type="term" value="C:cytosol"/>
    <property type="evidence" value="ECO:0007669"/>
    <property type="project" value="TreeGrafter"/>
</dbReference>
<dbReference type="GO" id="GO:0004479">
    <property type="term" value="F:methionyl-tRNA formyltransferase activity"/>
    <property type="evidence" value="ECO:0007669"/>
    <property type="project" value="UniProtKB-UniRule"/>
</dbReference>
<dbReference type="CDD" id="cd08646">
    <property type="entry name" value="FMT_core_Met-tRNA-FMT_N"/>
    <property type="match status" value="1"/>
</dbReference>
<dbReference type="CDD" id="cd08704">
    <property type="entry name" value="Met_tRNA_FMT_C"/>
    <property type="match status" value="1"/>
</dbReference>
<dbReference type="FunFam" id="3.40.50.170:FF:000004">
    <property type="entry name" value="Methionyl-tRNA formyltransferase"/>
    <property type="match status" value="1"/>
</dbReference>
<dbReference type="Gene3D" id="3.10.25.10">
    <property type="entry name" value="Formyl transferase, C-terminal domain"/>
    <property type="match status" value="1"/>
</dbReference>
<dbReference type="Gene3D" id="3.40.50.170">
    <property type="entry name" value="Formyl transferase, N-terminal domain"/>
    <property type="match status" value="1"/>
</dbReference>
<dbReference type="HAMAP" id="MF_00182">
    <property type="entry name" value="Formyl_trans"/>
    <property type="match status" value="1"/>
</dbReference>
<dbReference type="InterPro" id="IPR005794">
    <property type="entry name" value="Fmt"/>
</dbReference>
<dbReference type="InterPro" id="IPR005793">
    <property type="entry name" value="Formyl_trans_C"/>
</dbReference>
<dbReference type="InterPro" id="IPR037022">
    <property type="entry name" value="Formyl_trans_C_sf"/>
</dbReference>
<dbReference type="InterPro" id="IPR002376">
    <property type="entry name" value="Formyl_transf_N"/>
</dbReference>
<dbReference type="InterPro" id="IPR036477">
    <property type="entry name" value="Formyl_transf_N_sf"/>
</dbReference>
<dbReference type="InterPro" id="IPR011034">
    <property type="entry name" value="Formyl_transferase-like_C_sf"/>
</dbReference>
<dbReference type="InterPro" id="IPR001555">
    <property type="entry name" value="GART_AS"/>
</dbReference>
<dbReference type="InterPro" id="IPR044135">
    <property type="entry name" value="Met-tRNA-FMT_C"/>
</dbReference>
<dbReference type="InterPro" id="IPR041711">
    <property type="entry name" value="Met-tRNA-FMT_N"/>
</dbReference>
<dbReference type="NCBIfam" id="TIGR00460">
    <property type="entry name" value="fmt"/>
    <property type="match status" value="1"/>
</dbReference>
<dbReference type="PANTHER" id="PTHR11138">
    <property type="entry name" value="METHIONYL-TRNA FORMYLTRANSFERASE"/>
    <property type="match status" value="1"/>
</dbReference>
<dbReference type="PANTHER" id="PTHR11138:SF5">
    <property type="entry name" value="METHIONYL-TRNA FORMYLTRANSFERASE, MITOCHONDRIAL"/>
    <property type="match status" value="1"/>
</dbReference>
<dbReference type="Pfam" id="PF02911">
    <property type="entry name" value="Formyl_trans_C"/>
    <property type="match status" value="1"/>
</dbReference>
<dbReference type="Pfam" id="PF00551">
    <property type="entry name" value="Formyl_trans_N"/>
    <property type="match status" value="1"/>
</dbReference>
<dbReference type="SUPFAM" id="SSF50486">
    <property type="entry name" value="FMT C-terminal domain-like"/>
    <property type="match status" value="1"/>
</dbReference>
<dbReference type="SUPFAM" id="SSF53328">
    <property type="entry name" value="Formyltransferase"/>
    <property type="match status" value="1"/>
</dbReference>
<dbReference type="PROSITE" id="PS00373">
    <property type="entry name" value="GART"/>
    <property type="match status" value="1"/>
</dbReference>
<comment type="function">
    <text evidence="1">Attaches a formyl group to the free amino group of methionyl-tRNA(fMet). The formyl group appears to play a dual role in the initiator identity of N-formylmethionyl-tRNA by promoting its recognition by IF2 and preventing the misappropriation of this tRNA by the elongation apparatus.</text>
</comment>
<comment type="catalytic activity">
    <reaction evidence="1">
        <text>L-methionyl-tRNA(fMet) + (6R)-10-formyltetrahydrofolate = N-formyl-L-methionyl-tRNA(fMet) + (6S)-5,6,7,8-tetrahydrofolate + H(+)</text>
        <dbReference type="Rhea" id="RHEA:24380"/>
        <dbReference type="Rhea" id="RHEA-COMP:9952"/>
        <dbReference type="Rhea" id="RHEA-COMP:9953"/>
        <dbReference type="ChEBI" id="CHEBI:15378"/>
        <dbReference type="ChEBI" id="CHEBI:57453"/>
        <dbReference type="ChEBI" id="CHEBI:78530"/>
        <dbReference type="ChEBI" id="CHEBI:78844"/>
        <dbReference type="ChEBI" id="CHEBI:195366"/>
        <dbReference type="EC" id="2.1.2.9"/>
    </reaction>
</comment>
<comment type="similarity">
    <text evidence="1">Belongs to the Fmt family.</text>
</comment>
<feature type="chain" id="PRO_1000190042" description="Methionyl-tRNA formyltransferase">
    <location>
        <begin position="1"/>
        <end position="311"/>
    </location>
</feature>
<feature type="binding site" evidence="1">
    <location>
        <begin position="110"/>
        <end position="113"/>
    </location>
    <ligand>
        <name>(6S)-5,6,7,8-tetrahydrofolate</name>
        <dbReference type="ChEBI" id="CHEBI:57453"/>
    </ligand>
</feature>
<name>FMT_STRE4</name>
<protein>
    <recommendedName>
        <fullName evidence="1">Methionyl-tRNA formyltransferase</fullName>
        <ecNumber evidence="1">2.1.2.9</ecNumber>
    </recommendedName>
</protein>
<accession>C0M780</accession>
<evidence type="ECO:0000255" key="1">
    <source>
        <dbReference type="HAMAP-Rule" id="MF_00182"/>
    </source>
</evidence>
<proteinExistence type="inferred from homology"/>
<keyword id="KW-0648">Protein biosynthesis</keyword>
<keyword id="KW-0808">Transferase</keyword>
<gene>
    <name evidence="1" type="primary">fmt</name>
    <name type="ordered locus">SEQ_1777</name>
</gene>
<sequence length="311" mass="33366">MTRLIFMGTPQFSATVLQGLLEKPAYDILAVVTQPDRAVGRKKDITMTPVKKLALAHQLPVFQPEKLSGSQELADIMALGADGIVTAAFGQFLPTVLLDSVTFAVNVHASLLPKYRGGAPIHYAIINGDKEAGVTIMEMVKEMDAGDMISSASLPILDTDNVGTMFDKLAILGRDLLLKTLPDYLSGDLKPVPQDHSQATFSPNLSAEEERLDWSKPAREVFNHIRGMNPWPVAHTLLDGQRFKIYEAELAEGSGSAGQIIAKTKKALVVAAGEGALSLTLVQPAGKPKMPIVDFLNGIGRSLEVGDVLGE</sequence>